<sequence length="258" mass="29294">MLAIISPAKTLDFESAVKNFPVFQPHFTDYSEQLIEVCRKLSPQDLSSLMSISDKLAGLNVARFAEWTKIHNEDNSRPALFAFKGDVYTGLDADSLSEDDVIFAQSHLRMLSGLYGLLKPLDLMQPYRLEMGTKLANPKGKDLYAFWGNVITQAVQQAIDAQGDNVLVNLASDEYYKSVKENQLNAKIIKPVFLDNKNGKYKVISFYAKKARGLMCRYLIQNRLTDIEQLKEFDLGGYWFDSASSTETEFVFKRDINE</sequence>
<organism>
    <name type="scientific">Haemophilus influenzae (strain 86-028NP)</name>
    <dbReference type="NCBI Taxonomy" id="281310"/>
    <lineage>
        <taxon>Bacteria</taxon>
        <taxon>Pseudomonadati</taxon>
        <taxon>Pseudomonadota</taxon>
        <taxon>Gammaproteobacteria</taxon>
        <taxon>Pasteurellales</taxon>
        <taxon>Pasteurellaceae</taxon>
        <taxon>Haemophilus</taxon>
    </lineage>
</organism>
<dbReference type="EMBL" id="CP000057">
    <property type="protein sequence ID" value="AAX88021.1"/>
    <property type="status" value="ALT_INIT"/>
    <property type="molecule type" value="Genomic_DNA"/>
</dbReference>
<dbReference type="RefSeq" id="WP_041174750.1">
    <property type="nucleotide sequence ID" value="NC_007146.2"/>
</dbReference>
<dbReference type="SMR" id="Q4QLS6"/>
<dbReference type="KEGG" id="hit:NTHI1156"/>
<dbReference type="HOGENOM" id="CLU_061989_0_0_6"/>
<dbReference type="Proteomes" id="UP000002525">
    <property type="component" value="Chromosome"/>
</dbReference>
<dbReference type="GO" id="GO:0005829">
    <property type="term" value="C:cytosol"/>
    <property type="evidence" value="ECO:0007669"/>
    <property type="project" value="TreeGrafter"/>
</dbReference>
<dbReference type="GO" id="GO:0033194">
    <property type="term" value="P:response to hydroperoxide"/>
    <property type="evidence" value="ECO:0007669"/>
    <property type="project" value="TreeGrafter"/>
</dbReference>
<dbReference type="HAMAP" id="MF_00652">
    <property type="entry name" value="UPF0246"/>
    <property type="match status" value="1"/>
</dbReference>
<dbReference type="InterPro" id="IPR005583">
    <property type="entry name" value="YaaA"/>
</dbReference>
<dbReference type="NCBIfam" id="NF002541">
    <property type="entry name" value="PRK02101.1-1"/>
    <property type="match status" value="1"/>
</dbReference>
<dbReference type="NCBIfam" id="NF002542">
    <property type="entry name" value="PRK02101.1-3"/>
    <property type="match status" value="1"/>
</dbReference>
<dbReference type="PANTHER" id="PTHR30283:SF4">
    <property type="entry name" value="PEROXIDE STRESS RESISTANCE PROTEIN YAAA"/>
    <property type="match status" value="1"/>
</dbReference>
<dbReference type="PANTHER" id="PTHR30283">
    <property type="entry name" value="PEROXIDE STRESS RESPONSE PROTEIN YAAA"/>
    <property type="match status" value="1"/>
</dbReference>
<dbReference type="Pfam" id="PF03883">
    <property type="entry name" value="H2O2_YaaD"/>
    <property type="match status" value="1"/>
</dbReference>
<gene>
    <name type="ordered locus">NTHI1156</name>
</gene>
<accession>Q4QLS6</accession>
<proteinExistence type="inferred from homology"/>
<reference key="1">
    <citation type="journal article" date="2005" name="J. Bacteriol.">
        <title>Genomic sequence of an otitis media isolate of nontypeable Haemophilus influenzae: comparative study with H. influenzae serotype d, strain KW20.</title>
        <authorList>
            <person name="Harrison A."/>
            <person name="Dyer D.W."/>
            <person name="Gillaspy A."/>
            <person name="Ray W.C."/>
            <person name="Mungur R."/>
            <person name="Carson M.B."/>
            <person name="Zhong H."/>
            <person name="Gipson J."/>
            <person name="Gipson M."/>
            <person name="Johnson L.S."/>
            <person name="Lewis L."/>
            <person name="Bakaletz L.O."/>
            <person name="Munson R.S. Jr."/>
        </authorList>
    </citation>
    <scope>NUCLEOTIDE SEQUENCE [LARGE SCALE GENOMIC DNA]</scope>
    <source>
        <strain>86-028NP</strain>
    </source>
</reference>
<name>Y1156_HAEI8</name>
<feature type="chain" id="PRO_0000262021" description="UPF0246 protein NTHI1156">
    <location>
        <begin position="1"/>
        <end position="258"/>
    </location>
</feature>
<protein>
    <recommendedName>
        <fullName evidence="1">UPF0246 protein NTHI1156</fullName>
    </recommendedName>
</protein>
<evidence type="ECO:0000255" key="1">
    <source>
        <dbReference type="HAMAP-Rule" id="MF_00652"/>
    </source>
</evidence>
<evidence type="ECO:0000305" key="2"/>
<comment type="similarity">
    <text evidence="1">Belongs to the UPF0246 family.</text>
</comment>
<comment type="sequence caution" evidence="2">
    <conflict type="erroneous initiation">
        <sequence resource="EMBL-CDS" id="AAX88021"/>
    </conflict>
</comment>